<proteinExistence type="evidence at protein level"/>
<comment type="function">
    <text evidence="1">Transcription factor that specifically binds AT-rich DNA sequences related to the nuclear matrix attachment regions (MARs).</text>
</comment>
<comment type="subcellular location">
    <subcellularLocation>
        <location evidence="1">Nucleus</location>
    </subcellularLocation>
</comment>
<comment type="domain">
    <text evidence="5">The PPC domain mediates interactions between AHL proteins.</text>
</comment>
<comment type="sequence caution" evidence="8">
    <conflict type="erroneous gene model prediction">
        <sequence resource="EMBL-CDS" id="CAA17138"/>
    </conflict>
</comment>
<comment type="sequence caution" evidence="8">
    <conflict type="erroneous gene model prediction">
        <sequence resource="EMBL-CDS" id="CAB78797"/>
    </conflict>
</comment>
<reference key="1">
    <citation type="submission" date="1998-02" db="EMBL/GenBank/DDBJ databases">
        <title>Novel AT-hook containing DNA binding protein from Arabidopsis.</title>
        <authorList>
            <person name="Hofmann W.A."/>
            <person name="Saedler H."/>
            <person name="Huijser P."/>
        </authorList>
    </citation>
    <scope>NUCLEOTIDE SEQUENCE [MRNA]</scope>
    <source>
        <strain>cv. Landsberg erecta</strain>
        <tissue evidence="10">Flower bud</tissue>
    </source>
</reference>
<reference key="2">
    <citation type="journal article" date="1999" name="Nature">
        <title>Sequence and analysis of chromosome 4 of the plant Arabidopsis thaliana.</title>
        <authorList>
            <person name="Mayer K.F.X."/>
            <person name="Schueller C."/>
            <person name="Wambutt R."/>
            <person name="Murphy G."/>
            <person name="Volckaert G."/>
            <person name="Pohl T."/>
            <person name="Duesterhoeft A."/>
            <person name="Stiekema W."/>
            <person name="Entian K.-D."/>
            <person name="Terryn N."/>
            <person name="Harris B."/>
            <person name="Ansorge W."/>
            <person name="Brandt P."/>
            <person name="Grivell L.A."/>
            <person name="Rieger M."/>
            <person name="Weichselgartner M."/>
            <person name="de Simone V."/>
            <person name="Obermaier B."/>
            <person name="Mache R."/>
            <person name="Mueller M."/>
            <person name="Kreis M."/>
            <person name="Delseny M."/>
            <person name="Puigdomenech P."/>
            <person name="Watson M."/>
            <person name="Schmidtheini T."/>
            <person name="Reichert B."/>
            <person name="Portetelle D."/>
            <person name="Perez-Alonso M."/>
            <person name="Boutry M."/>
            <person name="Bancroft I."/>
            <person name="Vos P."/>
            <person name="Hoheisel J."/>
            <person name="Zimmermann W."/>
            <person name="Wedler H."/>
            <person name="Ridley P."/>
            <person name="Langham S.-A."/>
            <person name="McCullagh B."/>
            <person name="Bilham L."/>
            <person name="Robben J."/>
            <person name="van der Schueren J."/>
            <person name="Grymonprez B."/>
            <person name="Chuang Y.-J."/>
            <person name="Vandenbussche F."/>
            <person name="Braeken M."/>
            <person name="Weltjens I."/>
            <person name="Voet M."/>
            <person name="Bastiaens I."/>
            <person name="Aert R."/>
            <person name="Defoor E."/>
            <person name="Weitzenegger T."/>
            <person name="Bothe G."/>
            <person name="Ramsperger U."/>
            <person name="Hilbert H."/>
            <person name="Braun M."/>
            <person name="Holzer E."/>
            <person name="Brandt A."/>
            <person name="Peters S."/>
            <person name="van Staveren M."/>
            <person name="Dirkse W."/>
            <person name="Mooijman P."/>
            <person name="Klein Lankhorst R."/>
            <person name="Rose M."/>
            <person name="Hauf J."/>
            <person name="Koetter P."/>
            <person name="Berneiser S."/>
            <person name="Hempel S."/>
            <person name="Feldpausch M."/>
            <person name="Lamberth S."/>
            <person name="Van den Daele H."/>
            <person name="De Keyser A."/>
            <person name="Buysshaert C."/>
            <person name="Gielen J."/>
            <person name="Villarroel R."/>
            <person name="De Clercq R."/>
            <person name="van Montagu M."/>
            <person name="Rogers J."/>
            <person name="Cronin A."/>
            <person name="Quail M.A."/>
            <person name="Bray-Allen S."/>
            <person name="Clark L."/>
            <person name="Doggett J."/>
            <person name="Hall S."/>
            <person name="Kay M."/>
            <person name="Lennard N."/>
            <person name="McLay K."/>
            <person name="Mayes R."/>
            <person name="Pettett A."/>
            <person name="Rajandream M.A."/>
            <person name="Lyne M."/>
            <person name="Benes V."/>
            <person name="Rechmann S."/>
            <person name="Borkova D."/>
            <person name="Bloecker H."/>
            <person name="Scharfe M."/>
            <person name="Grimm M."/>
            <person name="Loehnert T.-H."/>
            <person name="Dose S."/>
            <person name="de Haan M."/>
            <person name="Maarse A.C."/>
            <person name="Schaefer M."/>
            <person name="Mueller-Auer S."/>
            <person name="Gabel C."/>
            <person name="Fuchs M."/>
            <person name="Fartmann B."/>
            <person name="Granderath K."/>
            <person name="Dauner D."/>
            <person name="Herzl A."/>
            <person name="Neumann S."/>
            <person name="Argiriou A."/>
            <person name="Vitale D."/>
            <person name="Liguori R."/>
            <person name="Piravandi E."/>
            <person name="Massenet O."/>
            <person name="Quigley F."/>
            <person name="Clabauld G."/>
            <person name="Muendlein A."/>
            <person name="Felber R."/>
            <person name="Schnabl S."/>
            <person name="Hiller R."/>
            <person name="Schmidt W."/>
            <person name="Lecharny A."/>
            <person name="Aubourg S."/>
            <person name="Chefdor F."/>
            <person name="Cooke R."/>
            <person name="Berger C."/>
            <person name="Monfort A."/>
            <person name="Casacuberta E."/>
            <person name="Gibbons T."/>
            <person name="Weber N."/>
            <person name="Vandenbol M."/>
            <person name="Bargues M."/>
            <person name="Terol J."/>
            <person name="Torres A."/>
            <person name="Perez-Perez A."/>
            <person name="Purnelle B."/>
            <person name="Bent E."/>
            <person name="Johnson S."/>
            <person name="Tacon D."/>
            <person name="Jesse T."/>
            <person name="Heijnen L."/>
            <person name="Schwarz S."/>
            <person name="Scholler P."/>
            <person name="Heber S."/>
            <person name="Francs P."/>
            <person name="Bielke C."/>
            <person name="Frishman D."/>
            <person name="Haase D."/>
            <person name="Lemcke K."/>
            <person name="Mewes H.-W."/>
            <person name="Stocker S."/>
            <person name="Zaccaria P."/>
            <person name="Bevan M."/>
            <person name="Wilson R.K."/>
            <person name="de la Bastide M."/>
            <person name="Habermann K."/>
            <person name="Parnell L."/>
            <person name="Dedhia N."/>
            <person name="Gnoj L."/>
            <person name="Schutz K."/>
            <person name="Huang E."/>
            <person name="Spiegel L."/>
            <person name="Sekhon M."/>
            <person name="Murray J."/>
            <person name="Sheet P."/>
            <person name="Cordes M."/>
            <person name="Abu-Threideh J."/>
            <person name="Stoneking T."/>
            <person name="Kalicki J."/>
            <person name="Graves T."/>
            <person name="Harmon G."/>
            <person name="Edwards J."/>
            <person name="Latreille P."/>
            <person name="Courtney L."/>
            <person name="Cloud J."/>
            <person name="Abbott A."/>
            <person name="Scott K."/>
            <person name="Johnson D."/>
            <person name="Minx P."/>
            <person name="Bentley D."/>
            <person name="Fulton B."/>
            <person name="Miller N."/>
            <person name="Greco T."/>
            <person name="Kemp K."/>
            <person name="Kramer J."/>
            <person name="Fulton L."/>
            <person name="Mardis E."/>
            <person name="Dante M."/>
            <person name="Pepin K."/>
            <person name="Hillier L.W."/>
            <person name="Nelson J."/>
            <person name="Spieth J."/>
            <person name="Ryan E."/>
            <person name="Andrews S."/>
            <person name="Geisel C."/>
            <person name="Layman D."/>
            <person name="Du H."/>
            <person name="Ali J."/>
            <person name="Berghoff A."/>
            <person name="Jones K."/>
            <person name="Drone K."/>
            <person name="Cotton M."/>
            <person name="Joshu C."/>
            <person name="Antonoiu B."/>
            <person name="Zidanic M."/>
            <person name="Strong C."/>
            <person name="Sun H."/>
            <person name="Lamar B."/>
            <person name="Yordan C."/>
            <person name="Ma P."/>
            <person name="Zhong J."/>
            <person name="Preston R."/>
            <person name="Vil D."/>
            <person name="Shekher M."/>
            <person name="Matero A."/>
            <person name="Shah R."/>
            <person name="Swaby I.K."/>
            <person name="O'Shaughnessy A."/>
            <person name="Rodriguez M."/>
            <person name="Hoffman J."/>
            <person name="Till S."/>
            <person name="Granat S."/>
            <person name="Shohdy N."/>
            <person name="Hasegawa A."/>
            <person name="Hameed A."/>
            <person name="Lodhi M."/>
            <person name="Johnson A."/>
            <person name="Chen E."/>
            <person name="Marra M.A."/>
            <person name="Martienssen R."/>
            <person name="McCombie W.R."/>
        </authorList>
    </citation>
    <scope>NUCLEOTIDE SEQUENCE [LARGE SCALE GENOMIC DNA]</scope>
    <source>
        <strain>cv. Columbia</strain>
    </source>
</reference>
<reference key="3">
    <citation type="journal article" date="2017" name="Plant J.">
        <title>Araport11: a complete reannotation of the Arabidopsis thaliana reference genome.</title>
        <authorList>
            <person name="Cheng C.Y."/>
            <person name="Krishnakumar V."/>
            <person name="Chan A.P."/>
            <person name="Thibaud-Nissen F."/>
            <person name="Schobel S."/>
            <person name="Town C.D."/>
        </authorList>
    </citation>
    <scope>GENOME REANNOTATION</scope>
    <source>
        <strain>cv. Columbia</strain>
    </source>
</reference>
<reference key="4">
    <citation type="journal article" date="2003" name="Science">
        <title>Empirical analysis of transcriptional activity in the Arabidopsis genome.</title>
        <authorList>
            <person name="Yamada K."/>
            <person name="Lim J."/>
            <person name="Dale J.M."/>
            <person name="Chen H."/>
            <person name="Shinn P."/>
            <person name="Palm C.J."/>
            <person name="Southwick A.M."/>
            <person name="Wu H.C."/>
            <person name="Kim C.J."/>
            <person name="Nguyen M."/>
            <person name="Pham P.K."/>
            <person name="Cheuk R.F."/>
            <person name="Karlin-Newmann G."/>
            <person name="Liu S.X."/>
            <person name="Lam B."/>
            <person name="Sakano H."/>
            <person name="Wu T."/>
            <person name="Yu G."/>
            <person name="Miranda M."/>
            <person name="Quach H.L."/>
            <person name="Tripp M."/>
            <person name="Chang C.H."/>
            <person name="Lee J.M."/>
            <person name="Toriumi M.J."/>
            <person name="Chan M.M."/>
            <person name="Tang C.C."/>
            <person name="Onodera C.S."/>
            <person name="Deng J.M."/>
            <person name="Akiyama K."/>
            <person name="Ansari Y."/>
            <person name="Arakawa T."/>
            <person name="Banh J."/>
            <person name="Banno F."/>
            <person name="Bowser L."/>
            <person name="Brooks S.Y."/>
            <person name="Carninci P."/>
            <person name="Chao Q."/>
            <person name="Choy N."/>
            <person name="Enju A."/>
            <person name="Goldsmith A.D."/>
            <person name="Gurjal M."/>
            <person name="Hansen N.F."/>
            <person name="Hayashizaki Y."/>
            <person name="Johnson-Hopson C."/>
            <person name="Hsuan V.W."/>
            <person name="Iida K."/>
            <person name="Karnes M."/>
            <person name="Khan S."/>
            <person name="Koesema E."/>
            <person name="Ishida J."/>
            <person name="Jiang P.X."/>
            <person name="Jones T."/>
            <person name="Kawai J."/>
            <person name="Kamiya A."/>
            <person name="Meyers C."/>
            <person name="Nakajima M."/>
            <person name="Narusaka M."/>
            <person name="Seki M."/>
            <person name="Sakurai T."/>
            <person name="Satou M."/>
            <person name="Tamse R."/>
            <person name="Vaysberg M."/>
            <person name="Wallender E.K."/>
            <person name="Wong C."/>
            <person name="Yamamura Y."/>
            <person name="Yuan S."/>
            <person name="Shinozaki K."/>
            <person name="Davis R.W."/>
            <person name="Theologis A."/>
            <person name="Ecker J.R."/>
        </authorList>
    </citation>
    <scope>NUCLEOTIDE SEQUENCE [LARGE SCALE MRNA]</scope>
    <source>
        <strain>cv. Columbia</strain>
    </source>
</reference>
<reference key="5">
    <citation type="journal article" date="2004" name="Plant Mol. Biol.">
        <title>Identification of a novel plant MAR DNA binding protein localized on chromosomal surfaces.</title>
        <authorList>
            <person name="Fujimoto S."/>
            <person name="Matsunaga S."/>
            <person name="Yonemura M."/>
            <person name="Uchiyama S."/>
            <person name="Azuma T."/>
            <person name="Fukui K."/>
        </authorList>
    </citation>
    <scope>IDENTIFICATION</scope>
    <scope>GENE FAMILY</scope>
    <scope>NOMENCLATURE</scope>
    <source>
        <strain>cv. Columbia</strain>
    </source>
</reference>
<reference key="6">
    <citation type="journal article" date="2009" name="Plant Physiol.">
        <title>Large-scale Arabidopsis phosphoproteome profiling reveals novel chloroplast kinase substrates and phosphorylation networks.</title>
        <authorList>
            <person name="Reiland S."/>
            <person name="Messerli G."/>
            <person name="Baerenfaller K."/>
            <person name="Gerrits B."/>
            <person name="Endler A."/>
            <person name="Grossmann J."/>
            <person name="Gruissem W."/>
            <person name="Baginsky S."/>
        </authorList>
    </citation>
    <scope>IDENTIFICATION BY MASS SPECTROMETRY [LARGE SCALE ANALYSIS]</scope>
</reference>
<reference key="7">
    <citation type="journal article" date="2013" name="Proc. Natl. Acad. Sci. U.S.A.">
        <title>Arabidopsis thaliana AHL family modulates hypocotyl growth redundantly by interacting with each other via the PPC/DUF296 domain.</title>
        <authorList>
            <person name="Zhao J."/>
            <person name="Favero D.S."/>
            <person name="Peng H."/>
            <person name="Neff M.M."/>
        </authorList>
    </citation>
    <scope>GENE FAMILY</scope>
    <scope>DOMAIN PPC</scope>
</reference>
<dbReference type="EMBL" id="AJ224119">
    <property type="protein sequence ID" value="CAA11837.1"/>
    <property type="molecule type" value="mRNA"/>
</dbReference>
<dbReference type="EMBL" id="AL021889">
    <property type="protein sequence ID" value="CAA17138.1"/>
    <property type="status" value="ALT_SEQ"/>
    <property type="molecule type" value="Genomic_DNA"/>
</dbReference>
<dbReference type="EMBL" id="AL161547">
    <property type="protein sequence ID" value="CAB78797.1"/>
    <property type="status" value="ALT_SEQ"/>
    <property type="molecule type" value="Genomic_DNA"/>
</dbReference>
<dbReference type="EMBL" id="CP002687">
    <property type="protein sequence ID" value="AEE83971.1"/>
    <property type="molecule type" value="Genomic_DNA"/>
</dbReference>
<dbReference type="EMBL" id="AY054610">
    <property type="protein sequence ID" value="AAK96801.1"/>
    <property type="molecule type" value="mRNA"/>
</dbReference>
<dbReference type="EMBL" id="AY081495">
    <property type="protein sequence ID" value="AAM10057.1"/>
    <property type="molecule type" value="mRNA"/>
</dbReference>
<dbReference type="EMBL" id="BR000349">
    <property type="protein sequence ID" value="FAA00284.1"/>
    <property type="molecule type" value="mRNA"/>
</dbReference>
<dbReference type="PIR" id="T05081">
    <property type="entry name" value="T05081"/>
</dbReference>
<dbReference type="PIR" id="T52291">
    <property type="entry name" value="T52291"/>
</dbReference>
<dbReference type="RefSeq" id="NP_567546.1">
    <property type="nucleotide sequence ID" value="NM_117905.3"/>
</dbReference>
<dbReference type="SMR" id="Q940I0"/>
<dbReference type="FunCoup" id="Q940I0">
    <property type="interactions" value="726"/>
</dbReference>
<dbReference type="IntAct" id="Q940I0">
    <property type="interactions" value="10"/>
</dbReference>
<dbReference type="STRING" id="3702.Q940I0"/>
<dbReference type="GlyGen" id="Q940I0">
    <property type="glycosylation" value="1 site, 1 O-linked glycan (1 site)"/>
</dbReference>
<dbReference type="iPTMnet" id="Q940I0"/>
<dbReference type="PaxDb" id="3702-AT4G17950.1"/>
<dbReference type="ProteomicsDB" id="244759"/>
<dbReference type="EnsemblPlants" id="AT4G17950.1">
    <property type="protein sequence ID" value="AT4G17950.1"/>
    <property type="gene ID" value="AT4G17950"/>
</dbReference>
<dbReference type="GeneID" id="827520"/>
<dbReference type="Gramene" id="AT4G17950.1">
    <property type="protein sequence ID" value="AT4G17950.1"/>
    <property type="gene ID" value="AT4G17950"/>
</dbReference>
<dbReference type="KEGG" id="ath:AT4G17950"/>
<dbReference type="Araport" id="AT4G17950"/>
<dbReference type="TAIR" id="AT4G17950">
    <property type="gene designation" value="AHL13"/>
</dbReference>
<dbReference type="eggNOG" id="ENOG502R1P2">
    <property type="taxonomic scope" value="Eukaryota"/>
</dbReference>
<dbReference type="HOGENOM" id="CLU_039808_7_2_1"/>
<dbReference type="InParanoid" id="Q940I0"/>
<dbReference type="OMA" id="ANMGWPK"/>
<dbReference type="PhylomeDB" id="Q940I0"/>
<dbReference type="CD-CODE" id="4299E36E">
    <property type="entry name" value="Nucleolus"/>
</dbReference>
<dbReference type="PRO" id="PR:Q940I0"/>
<dbReference type="Proteomes" id="UP000006548">
    <property type="component" value="Chromosome 4"/>
</dbReference>
<dbReference type="ExpressionAtlas" id="Q940I0">
    <property type="expression patterns" value="baseline and differential"/>
</dbReference>
<dbReference type="GO" id="GO:0005634">
    <property type="term" value="C:nucleus"/>
    <property type="evidence" value="ECO:0007669"/>
    <property type="project" value="UniProtKB-SubCell"/>
</dbReference>
<dbReference type="GO" id="GO:0003680">
    <property type="term" value="F:minor groove of adenine-thymine-rich DNA binding"/>
    <property type="evidence" value="ECO:0007669"/>
    <property type="project" value="InterPro"/>
</dbReference>
<dbReference type="CDD" id="cd11378">
    <property type="entry name" value="DUF296"/>
    <property type="match status" value="1"/>
</dbReference>
<dbReference type="Gene3D" id="3.30.1330.80">
    <property type="entry name" value="Hypothetical protein, similar to alpha- acetolactate decarboxylase, domain 2"/>
    <property type="match status" value="1"/>
</dbReference>
<dbReference type="InterPro" id="IPR039605">
    <property type="entry name" value="AHL"/>
</dbReference>
<dbReference type="InterPro" id="IPR017956">
    <property type="entry name" value="AT_hook_DNA-bd_motif"/>
</dbReference>
<dbReference type="InterPro" id="IPR005175">
    <property type="entry name" value="PPC_dom"/>
</dbReference>
<dbReference type="PANTHER" id="PTHR31500:SF63">
    <property type="entry name" value="AT-HOOK MOTIF NUCLEAR-LOCALIZED PROTEIN 13"/>
    <property type="match status" value="1"/>
</dbReference>
<dbReference type="PANTHER" id="PTHR31500">
    <property type="entry name" value="AT-HOOK MOTIF NUCLEAR-LOCALIZED PROTEIN 9"/>
    <property type="match status" value="1"/>
</dbReference>
<dbReference type="Pfam" id="PF03479">
    <property type="entry name" value="PCC"/>
    <property type="match status" value="1"/>
</dbReference>
<dbReference type="SMART" id="SM00384">
    <property type="entry name" value="AT_hook"/>
    <property type="match status" value="2"/>
</dbReference>
<dbReference type="SUPFAM" id="SSF117856">
    <property type="entry name" value="AF0104/ALDC/Ptd012-like"/>
    <property type="match status" value="1"/>
</dbReference>
<dbReference type="PROSITE" id="PS51742">
    <property type="entry name" value="PPC"/>
    <property type="match status" value="1"/>
</dbReference>
<organism>
    <name type="scientific">Arabidopsis thaliana</name>
    <name type="common">Mouse-ear cress</name>
    <dbReference type="NCBI Taxonomy" id="3702"/>
    <lineage>
        <taxon>Eukaryota</taxon>
        <taxon>Viridiplantae</taxon>
        <taxon>Streptophyta</taxon>
        <taxon>Embryophyta</taxon>
        <taxon>Tracheophyta</taxon>
        <taxon>Spermatophyta</taxon>
        <taxon>Magnoliopsida</taxon>
        <taxon>eudicotyledons</taxon>
        <taxon>Gunneridae</taxon>
        <taxon>Pentapetalae</taxon>
        <taxon>rosids</taxon>
        <taxon>malvids</taxon>
        <taxon>Brassicales</taxon>
        <taxon>Brassicaceae</taxon>
        <taxon>Camelineae</taxon>
        <taxon>Arabidopsis</taxon>
    </lineage>
</organism>
<gene>
    <name evidence="6" type="primary">AHL13</name>
    <name evidence="7" type="synonym">AHP2</name>
    <name evidence="9" type="ordered locus">At4g17950</name>
    <name evidence="11" type="ORF">T6K21.130</name>
</gene>
<name>AHL13_ARATH</name>
<accession>Q940I0</accession>
<accession>O49350</accession>
<accession>O49694</accession>
<feature type="chain" id="PRO_0000432031" description="AT-hook motif nuclear-localized protein 13">
    <location>
        <begin position="1"/>
        <end position="439"/>
    </location>
</feature>
<feature type="domain" description="PPC" evidence="3">
    <location>
        <begin position="217"/>
        <end position="359"/>
    </location>
</feature>
<feature type="DNA-binding region" description="A.T hook 1" evidence="2">
    <location>
        <begin position="131"/>
        <end position="143"/>
    </location>
</feature>
<feature type="DNA-binding region" description="A.T hook 2" evidence="2">
    <location>
        <begin position="196"/>
        <end position="208"/>
    </location>
</feature>
<feature type="region of interest" description="Disordered" evidence="4">
    <location>
        <begin position="1"/>
        <end position="46"/>
    </location>
</feature>
<feature type="region of interest" description="Disordered" evidence="4">
    <location>
        <begin position="69"/>
        <end position="216"/>
    </location>
</feature>
<feature type="region of interest" description="Disordered" evidence="4">
    <location>
        <begin position="342"/>
        <end position="439"/>
    </location>
</feature>
<feature type="short sequence motif" description="Bipartite nuclear localization signal" evidence="8">
    <location>
        <begin position="131"/>
        <end position="139"/>
    </location>
</feature>
<feature type="compositionally biased region" description="Low complexity" evidence="4">
    <location>
        <begin position="9"/>
        <end position="31"/>
    </location>
</feature>
<feature type="compositionally biased region" description="Low complexity" evidence="4">
    <location>
        <begin position="79"/>
        <end position="95"/>
    </location>
</feature>
<feature type="compositionally biased region" description="Polar residues" evidence="4">
    <location>
        <begin position="109"/>
        <end position="120"/>
    </location>
</feature>
<feature type="compositionally biased region" description="Basic residues" evidence="4">
    <location>
        <begin position="130"/>
        <end position="139"/>
    </location>
</feature>
<feature type="compositionally biased region" description="Gly residues" evidence="4">
    <location>
        <begin position="143"/>
        <end position="152"/>
    </location>
</feature>
<feature type="compositionally biased region" description="Gly residues" evidence="4">
    <location>
        <begin position="171"/>
        <end position="183"/>
    </location>
</feature>
<feature type="compositionally biased region" description="Polar residues" evidence="4">
    <location>
        <begin position="347"/>
        <end position="357"/>
    </location>
</feature>
<feature type="compositionally biased region" description="Low complexity" evidence="4">
    <location>
        <begin position="376"/>
        <end position="386"/>
    </location>
</feature>
<feature type="compositionally biased region" description="Low complexity" evidence="4">
    <location>
        <begin position="403"/>
        <end position="416"/>
    </location>
</feature>
<feature type="compositionally biased region" description="Polar residues" evidence="4">
    <location>
        <begin position="428"/>
        <end position="439"/>
    </location>
</feature>
<feature type="sequence conflict" description="In Ref. 1; CAA11837." evidence="8" ref="1">
    <original>S</original>
    <variation>F</variation>
    <location>
        <position position="416"/>
    </location>
</feature>
<sequence>MDSREIHHQQQQQQQQQQQQQQQQQHLQQQQQPPPGMLMSHHNSYNRNPNAAAAVLMGHNTSTSQAMHQRLPFGGSMSPHQPQQHQYHHPQPQQQIDQKTLESLGFDGSPSSVAATQQHSMRFGIDHQQVKKKRGRPRKYAADGGGGGGGGSNIALGLAPTSPLPSASNSYGGGNEGGGGGDSAGANANSSDPPAKRNRGRPPGSGKKQLDALGGTGGVGFTPHVIEVKTGEDIATKILAFTNQGPRAICILSATGAVTNVMLRQANNSNPTGTVKYEGRFEIISLSGSFLNSESNGTVTKTGNLSVSLAGHEGRIVGGCVDGMLVAGSQVQVIVGSFVPDGRKQKQSAGRAQNTPEPASAPANMLSFGGVGGPGSPRSQGQQHSSESSEENESNSPLHRRSNNNNSNNHGIFGNSTPQPLHQIPMQMYQNLWPGNSPQ</sequence>
<protein>
    <recommendedName>
        <fullName evidence="12">AT-hook motif nuclear-localized protein 13</fullName>
    </recommendedName>
    <alternativeName>
        <fullName evidence="10">AT-hook protein 2</fullName>
    </alternativeName>
</protein>
<evidence type="ECO:0000250" key="1">
    <source>
        <dbReference type="UniProtKB" id="Q8VYJ2"/>
    </source>
</evidence>
<evidence type="ECO:0000255" key="2"/>
<evidence type="ECO:0000255" key="3">
    <source>
        <dbReference type="PROSITE-ProRule" id="PRU01078"/>
    </source>
</evidence>
<evidence type="ECO:0000256" key="4">
    <source>
        <dbReference type="SAM" id="MobiDB-lite"/>
    </source>
</evidence>
<evidence type="ECO:0000269" key="5">
    <source>
    </source>
</evidence>
<evidence type="ECO:0000303" key="6">
    <source>
    </source>
</evidence>
<evidence type="ECO:0000303" key="7">
    <source ref="1"/>
</evidence>
<evidence type="ECO:0000305" key="8"/>
<evidence type="ECO:0000312" key="9">
    <source>
        <dbReference type="Araport" id="AT4G17950"/>
    </source>
</evidence>
<evidence type="ECO:0000312" key="10">
    <source>
        <dbReference type="EMBL" id="CAA11837.1"/>
    </source>
</evidence>
<evidence type="ECO:0000312" key="11">
    <source>
        <dbReference type="EMBL" id="CAA17138.1"/>
    </source>
</evidence>
<evidence type="ECO:0000312" key="12">
    <source>
        <dbReference type="EMBL" id="FAA00284.1"/>
    </source>
</evidence>
<keyword id="KW-0238">DNA-binding</keyword>
<keyword id="KW-0539">Nucleus</keyword>
<keyword id="KW-1185">Reference proteome</keyword>
<keyword id="KW-0677">Repeat</keyword>
<keyword id="KW-0804">Transcription</keyword>
<keyword id="KW-0805">Transcription regulation</keyword>